<protein>
    <recommendedName>
        <fullName>Bifunctional protein PyrR 2</fullName>
    </recommendedName>
    <domain>
        <recommendedName>
            <fullName>Pyrimidine operon regulatory protein 2</fullName>
        </recommendedName>
    </domain>
    <domain>
        <recommendedName>
            <fullName>Uracil phosphoribosyltransferase 2</fullName>
            <shortName>UPRTase 2</shortName>
            <ecNumber>2.4.2.9</ecNumber>
        </recommendedName>
    </domain>
</protein>
<gene>
    <name type="primary">pyrR2</name>
    <name type="ordered locus">lp_1782</name>
</gene>
<organism>
    <name type="scientific">Lactiplantibacillus plantarum (strain ATCC BAA-793 / NCIMB 8826 / WCFS1)</name>
    <name type="common">Lactobacillus plantarum</name>
    <dbReference type="NCBI Taxonomy" id="220668"/>
    <lineage>
        <taxon>Bacteria</taxon>
        <taxon>Bacillati</taxon>
        <taxon>Bacillota</taxon>
        <taxon>Bacilli</taxon>
        <taxon>Lactobacillales</taxon>
        <taxon>Lactobacillaceae</taxon>
        <taxon>Lactiplantibacillus</taxon>
    </lineage>
</organism>
<evidence type="ECO:0000250" key="1"/>
<evidence type="ECO:0000305" key="2"/>
<sequence length="174" mass="19303">MQKEVVDSMAMKRALTRITYEIIEQNKGIKNVVLVGVKTRGVYIAQRIAAQLQQLEGTAIPVGELDITAFRDDQPLDQARLSTDYQLTFSVADKRVILVDDVLFTGRTIRAALDALMGGGRPQSIALAVLVDRGHRELPIRADFIGRNIPTARQERIKVTVNEIDGHDGIEIIN</sequence>
<comment type="function">
    <text evidence="1">Regulates transcriptional attenuation of the pyrimidine nucleotide (pyr) operon by binding in a uridine-dependent manner to specific sites on pyr mRNA. This disrupts an antiterminator hairpin in the RNA and favors formation of a downstream transcription terminator, leading to a reduced expression of downstream genes (By similarity).</text>
</comment>
<comment type="function">
    <text evidence="1">Also displays a weak uracil phosphoribosyltransferase activity which is not physiologically significant.</text>
</comment>
<comment type="catalytic activity">
    <reaction>
        <text>UMP + diphosphate = 5-phospho-alpha-D-ribose 1-diphosphate + uracil</text>
        <dbReference type="Rhea" id="RHEA:13017"/>
        <dbReference type="ChEBI" id="CHEBI:17568"/>
        <dbReference type="ChEBI" id="CHEBI:33019"/>
        <dbReference type="ChEBI" id="CHEBI:57865"/>
        <dbReference type="ChEBI" id="CHEBI:58017"/>
        <dbReference type="EC" id="2.4.2.9"/>
    </reaction>
</comment>
<comment type="subunit">
    <text evidence="1">Homodimer and homohexamer; in equilibrium.</text>
</comment>
<comment type="similarity">
    <text evidence="2">Belongs to the purine/pyrimidine phosphoribosyltransferase family. PyrR subfamily.</text>
</comment>
<feature type="chain" id="PRO_0000183042" description="Bifunctional protein PyrR 2">
    <location>
        <begin position="1"/>
        <end position="174"/>
    </location>
</feature>
<feature type="short sequence motif" description="PRPP-binding" evidence="1">
    <location>
        <begin position="96"/>
        <end position="108"/>
    </location>
</feature>
<feature type="binding site" evidence="1">
    <location>
        <begin position="39"/>
        <end position="40"/>
    </location>
    <ligand>
        <name>substrate</name>
    </ligand>
</feature>
<feature type="binding site" evidence="1">
    <location>
        <begin position="100"/>
        <end position="108"/>
    </location>
    <ligand>
        <name>substrate</name>
    </ligand>
</feature>
<feature type="binding site" evidence="1">
    <location>
        <position position="133"/>
    </location>
    <ligand>
        <name>substrate</name>
    </ligand>
</feature>
<proteinExistence type="inferred from homology"/>
<reference key="1">
    <citation type="journal article" date="2003" name="Proc. Natl. Acad. Sci. U.S.A.">
        <title>Complete genome sequence of Lactobacillus plantarum WCFS1.</title>
        <authorList>
            <person name="Kleerebezem M."/>
            <person name="Boekhorst J."/>
            <person name="van Kranenburg R."/>
            <person name="Molenaar D."/>
            <person name="Kuipers O.P."/>
            <person name="Leer R."/>
            <person name="Tarchini R."/>
            <person name="Peters S.A."/>
            <person name="Sandbrink H.M."/>
            <person name="Fiers M.W.E.J."/>
            <person name="Stiekema W."/>
            <person name="Klein Lankhorst R.M."/>
            <person name="Bron P.A."/>
            <person name="Hoffer S.M."/>
            <person name="Nierop Groot M.N."/>
            <person name="Kerkhoven R."/>
            <person name="De Vries M."/>
            <person name="Ursing B."/>
            <person name="De Vos W.M."/>
            <person name="Siezen R.J."/>
        </authorList>
    </citation>
    <scope>NUCLEOTIDE SEQUENCE [LARGE SCALE GENOMIC DNA]</scope>
    <source>
        <strain>ATCC BAA-793 / NCIMB 8826 / WCFS1</strain>
    </source>
</reference>
<reference key="2">
    <citation type="journal article" date="2012" name="J. Bacteriol.">
        <title>Complete resequencing and reannotation of the Lactobacillus plantarum WCFS1 genome.</title>
        <authorList>
            <person name="Siezen R.J."/>
            <person name="Francke C."/>
            <person name="Renckens B."/>
            <person name="Boekhorst J."/>
            <person name="Wels M."/>
            <person name="Kleerebezem M."/>
            <person name="van Hijum S.A."/>
        </authorList>
    </citation>
    <scope>NUCLEOTIDE SEQUENCE [LARGE SCALE GENOMIC DNA]</scope>
    <scope>GENOME REANNOTATION</scope>
    <source>
        <strain>ATCC BAA-793 / NCIMB 8826 / WCFS1</strain>
    </source>
</reference>
<accession>P59389</accession>
<accession>F9UPD0</accession>
<dbReference type="EC" id="2.4.2.9"/>
<dbReference type="EMBL" id="AL935263">
    <property type="protein sequence ID" value="CCC79069.1"/>
    <property type="molecule type" value="Genomic_DNA"/>
</dbReference>
<dbReference type="RefSeq" id="YP_004889583.1">
    <property type="nucleotide sequence ID" value="NC_004567.2"/>
</dbReference>
<dbReference type="SMR" id="P59389"/>
<dbReference type="STRING" id="220668.lp_1782"/>
<dbReference type="EnsemblBacteria" id="CCC79069">
    <property type="protein sequence ID" value="CCC79069"/>
    <property type="gene ID" value="lp_1782"/>
</dbReference>
<dbReference type="KEGG" id="lpl:lp_1782"/>
<dbReference type="PATRIC" id="fig|220668.9.peg.1503"/>
<dbReference type="eggNOG" id="COG2065">
    <property type="taxonomic scope" value="Bacteria"/>
</dbReference>
<dbReference type="HOGENOM" id="CLU_094234_2_1_9"/>
<dbReference type="OrthoDB" id="9802227at2"/>
<dbReference type="PhylomeDB" id="P59389"/>
<dbReference type="Proteomes" id="UP000000432">
    <property type="component" value="Chromosome"/>
</dbReference>
<dbReference type="GO" id="GO:0003723">
    <property type="term" value="F:RNA binding"/>
    <property type="evidence" value="ECO:0007669"/>
    <property type="project" value="UniProtKB-UniRule"/>
</dbReference>
<dbReference type="GO" id="GO:0004845">
    <property type="term" value="F:uracil phosphoribosyltransferase activity"/>
    <property type="evidence" value="ECO:0007669"/>
    <property type="project" value="UniProtKB-UniRule"/>
</dbReference>
<dbReference type="GO" id="GO:0006353">
    <property type="term" value="P:DNA-templated transcription termination"/>
    <property type="evidence" value="ECO:0007669"/>
    <property type="project" value="UniProtKB-UniRule"/>
</dbReference>
<dbReference type="CDD" id="cd06223">
    <property type="entry name" value="PRTases_typeI"/>
    <property type="match status" value="1"/>
</dbReference>
<dbReference type="FunFam" id="3.40.50.2020:FF:000020">
    <property type="entry name" value="Bifunctional protein PyrR"/>
    <property type="match status" value="1"/>
</dbReference>
<dbReference type="Gene3D" id="3.40.50.2020">
    <property type="match status" value="1"/>
</dbReference>
<dbReference type="HAMAP" id="MF_01219">
    <property type="entry name" value="PyrR"/>
    <property type="match status" value="1"/>
</dbReference>
<dbReference type="InterPro" id="IPR000836">
    <property type="entry name" value="PRibTrfase_dom"/>
</dbReference>
<dbReference type="InterPro" id="IPR029057">
    <property type="entry name" value="PRTase-like"/>
</dbReference>
<dbReference type="InterPro" id="IPR023050">
    <property type="entry name" value="PyrR"/>
</dbReference>
<dbReference type="InterPro" id="IPR050137">
    <property type="entry name" value="PyrR_bifunctional"/>
</dbReference>
<dbReference type="NCBIfam" id="NF003548">
    <property type="entry name" value="PRK05205.1-4"/>
    <property type="match status" value="1"/>
</dbReference>
<dbReference type="NCBIfam" id="NF003549">
    <property type="entry name" value="PRK05205.1-5"/>
    <property type="match status" value="1"/>
</dbReference>
<dbReference type="PANTHER" id="PTHR11608">
    <property type="entry name" value="BIFUNCTIONAL PROTEIN PYRR"/>
    <property type="match status" value="1"/>
</dbReference>
<dbReference type="PANTHER" id="PTHR11608:SF0">
    <property type="entry name" value="BIFUNCTIONAL PROTEIN PYRR"/>
    <property type="match status" value="1"/>
</dbReference>
<dbReference type="Pfam" id="PF00156">
    <property type="entry name" value="Pribosyltran"/>
    <property type="match status" value="1"/>
</dbReference>
<dbReference type="SUPFAM" id="SSF53271">
    <property type="entry name" value="PRTase-like"/>
    <property type="match status" value="1"/>
</dbReference>
<keyword id="KW-0328">Glycosyltransferase</keyword>
<keyword id="KW-1185">Reference proteome</keyword>
<keyword id="KW-0694">RNA-binding</keyword>
<keyword id="KW-0804">Transcription</keyword>
<keyword id="KW-0805">Transcription regulation</keyword>
<keyword id="KW-0806">Transcription termination</keyword>
<keyword id="KW-0808">Transferase</keyword>
<name>PYRR2_LACPL</name>